<keyword id="KW-0997">Cell inner membrane</keyword>
<keyword id="KW-1003">Cell membrane</keyword>
<keyword id="KW-0378">Hydrolase</keyword>
<keyword id="KW-0472">Membrane</keyword>
<keyword id="KW-0479">Metal-binding</keyword>
<keyword id="KW-0489">Methyltransferase</keyword>
<keyword id="KW-0511">Multifunctional enzyme</keyword>
<keyword id="KW-0645">Protease</keyword>
<keyword id="KW-1185">Reference proteome</keyword>
<keyword id="KW-0949">S-adenosyl-L-methionine</keyword>
<keyword id="KW-0808">Transferase</keyword>
<keyword id="KW-0812">Transmembrane</keyword>
<keyword id="KW-1133">Transmembrane helix</keyword>
<keyword id="KW-0862">Zinc</keyword>
<dbReference type="EC" id="3.4.23.43" evidence="2 3 5"/>
<dbReference type="EC" id="2.1.1.-" evidence="2 3 5"/>
<dbReference type="EMBL" id="M32066">
    <property type="protein sequence ID" value="AAA25734.1"/>
    <property type="molecule type" value="Genomic_DNA"/>
</dbReference>
<dbReference type="EMBL" id="M61096">
    <property type="protein sequence ID" value="AAA26023.1"/>
    <property type="molecule type" value="Genomic_DNA"/>
</dbReference>
<dbReference type="EMBL" id="AE004091">
    <property type="protein sequence ID" value="AAG07916.1"/>
    <property type="molecule type" value="Genomic_DNA"/>
</dbReference>
<dbReference type="PIR" id="A39131">
    <property type="entry name" value="A39131"/>
</dbReference>
<dbReference type="RefSeq" id="NP_253218.1">
    <property type="nucleotide sequence ID" value="NC_002516.2"/>
</dbReference>
<dbReference type="RefSeq" id="WP_003112839.1">
    <property type="nucleotide sequence ID" value="NZ_QZGE01000004.1"/>
</dbReference>
<dbReference type="FunCoup" id="P22610">
    <property type="interactions" value="418"/>
</dbReference>
<dbReference type="STRING" id="208964.PA4528"/>
<dbReference type="MEROPS" id="A24.001"/>
<dbReference type="TCDB" id="3.A.15.2.1">
    <property type="family name" value="the outer membrane protein secreting main terminal branch (mtb) family"/>
</dbReference>
<dbReference type="PaxDb" id="208964-PA4528"/>
<dbReference type="GeneID" id="877861"/>
<dbReference type="KEGG" id="pae:PA4528"/>
<dbReference type="PATRIC" id="fig|208964.12.peg.4739"/>
<dbReference type="PseudoCAP" id="PA4528"/>
<dbReference type="HOGENOM" id="CLU_057101_0_0_6"/>
<dbReference type="InParanoid" id="P22610"/>
<dbReference type="OrthoDB" id="9789291at2"/>
<dbReference type="PhylomeDB" id="P22610"/>
<dbReference type="BioCyc" id="MetaCyc:MONOMER-21661"/>
<dbReference type="BioCyc" id="PAER208964:G1FZ6-4618-MONOMER"/>
<dbReference type="BRENDA" id="3.4.23.43">
    <property type="organism ID" value="5087"/>
</dbReference>
<dbReference type="Proteomes" id="UP000002438">
    <property type="component" value="Chromosome"/>
</dbReference>
<dbReference type="GO" id="GO:0005886">
    <property type="term" value="C:plasma membrane"/>
    <property type="evidence" value="ECO:0000314"/>
    <property type="project" value="PseudoCAP"/>
</dbReference>
<dbReference type="GO" id="GO:0015627">
    <property type="term" value="C:type II protein secretion system complex"/>
    <property type="evidence" value="ECO:0000314"/>
    <property type="project" value="PseudoCAP"/>
</dbReference>
<dbReference type="GO" id="GO:0004190">
    <property type="term" value="F:aspartic-type endopeptidase activity"/>
    <property type="evidence" value="ECO:0000314"/>
    <property type="project" value="PseudoCAP"/>
</dbReference>
<dbReference type="GO" id="GO:0046872">
    <property type="term" value="F:metal ion binding"/>
    <property type="evidence" value="ECO:0007669"/>
    <property type="project" value="UniProtKB-KW"/>
</dbReference>
<dbReference type="GO" id="GO:0008170">
    <property type="term" value="F:N-methyltransferase activity"/>
    <property type="evidence" value="ECO:0000314"/>
    <property type="project" value="PseudoCAP"/>
</dbReference>
<dbReference type="GO" id="GO:0032259">
    <property type="term" value="P:methylation"/>
    <property type="evidence" value="ECO:0007669"/>
    <property type="project" value="UniProtKB-KW"/>
</dbReference>
<dbReference type="GO" id="GO:0009297">
    <property type="term" value="P:pilus assembly"/>
    <property type="evidence" value="ECO:0000314"/>
    <property type="project" value="PseudoCAP"/>
</dbReference>
<dbReference type="GO" id="GO:0006465">
    <property type="term" value="P:signal peptide processing"/>
    <property type="evidence" value="ECO:0000314"/>
    <property type="project" value="PseudoCAP"/>
</dbReference>
<dbReference type="GO" id="GO:0043683">
    <property type="term" value="P:type IV pilus assembly"/>
    <property type="evidence" value="ECO:0000315"/>
    <property type="project" value="PseudoCAP"/>
</dbReference>
<dbReference type="FunFam" id="1.20.120.1220:FF:000001">
    <property type="entry name" value="Type 4 prepilin-like proteins leader peptide-processing enzyme"/>
    <property type="match status" value="1"/>
</dbReference>
<dbReference type="Gene3D" id="1.20.120.1220">
    <property type="match status" value="1"/>
</dbReference>
<dbReference type="InterPro" id="IPR014032">
    <property type="entry name" value="Peptidase_A24A_bac"/>
</dbReference>
<dbReference type="InterPro" id="IPR000045">
    <property type="entry name" value="Prepilin_IV_endopep_pep"/>
</dbReference>
<dbReference type="InterPro" id="IPR010627">
    <property type="entry name" value="Prepilin_pept_A24_N"/>
</dbReference>
<dbReference type="InterPro" id="IPR050882">
    <property type="entry name" value="Prepilin_peptidase/N-MTase"/>
</dbReference>
<dbReference type="PANTHER" id="PTHR30487:SF0">
    <property type="entry name" value="PREPILIN LEADER PEPTIDASE_N-METHYLTRANSFERASE-RELATED"/>
    <property type="match status" value="1"/>
</dbReference>
<dbReference type="PANTHER" id="PTHR30487">
    <property type="entry name" value="TYPE 4 PREPILIN-LIKE PROTEINS LEADER PEPTIDE-PROCESSING ENZYME"/>
    <property type="match status" value="1"/>
</dbReference>
<dbReference type="Pfam" id="PF06750">
    <property type="entry name" value="A24_N_bact"/>
    <property type="match status" value="1"/>
</dbReference>
<dbReference type="Pfam" id="PF01478">
    <property type="entry name" value="Peptidase_A24"/>
    <property type="match status" value="1"/>
</dbReference>
<dbReference type="PRINTS" id="PR00864">
    <property type="entry name" value="PREPILNPTASE"/>
</dbReference>
<accession>P22610</accession>
<organism>
    <name type="scientific">Pseudomonas aeruginosa (strain ATCC 15692 / DSM 22644 / CIP 104116 / JCM 14847 / LMG 12228 / 1C / PRS 101 / PAO1)</name>
    <dbReference type="NCBI Taxonomy" id="208964"/>
    <lineage>
        <taxon>Bacteria</taxon>
        <taxon>Pseudomonadati</taxon>
        <taxon>Pseudomonadota</taxon>
        <taxon>Gammaproteobacteria</taxon>
        <taxon>Pseudomonadales</taxon>
        <taxon>Pseudomonadaceae</taxon>
        <taxon>Pseudomonas</taxon>
    </lineage>
</organism>
<comment type="function">
    <text evidence="2 3 4 5">Plays an essential role in type IV pili and type II pseudopili formation by proteolytically removing the leader sequence from substrate proteins and subsequently monomethylating the alpha-amino group of the newly exposed N-terminal phenylalanine (PubMed:23255525, PubMed:8096341, PubMed:8340405). Substrates include proteins required for pilus biogenesis PilE, PilV, PilW, and PilX as well as some components of the type II general secretory apparatus GspG, GspH, GspI and GspJ (PubMed:8331069).</text>
</comment>
<comment type="catalytic activity">
    <reaction evidence="2 3">
        <text>Typically cleaves a -Gly-|-Phe- bond to release an N-terminal, basic peptide of 5-8 residues from type IV prepilin, and then N-methylates the new N-terminal amino group, the methyl donor being S-adenosyl-L-methionine.</text>
        <dbReference type="EC" id="3.4.23.43"/>
    </reaction>
</comment>
<comment type="cofactor">
    <cofactor>
        <name>Zn(2+)</name>
        <dbReference type="ChEBI" id="CHEBI:29105"/>
    </cofactor>
    <text evidence="2">Zinc is required for the N-terminal methylation of the mature pilin, but not for signal peptide cleavage.</text>
</comment>
<comment type="subcellular location">
    <subcellularLocation>
        <location evidence="4">Cell inner membrane</location>
        <topology>Multi-pass membrane protein</topology>
    </subcellularLocation>
</comment>
<comment type="similarity">
    <text evidence="8">Belongs to the peptidase A24 family.</text>
</comment>
<gene>
    <name type="primary">pilD</name>
    <name type="synonym">xcpA</name>
    <name type="ordered locus">PA4528</name>
</gene>
<sequence>MPLLDYLASHPLAFVLCTILLGLLVGSFLNVVVHRLPKMMERNWKAEAREALGLEPEPKQATYNLVLPNSACPRCGHEIRPWENIPLVSYLALGGKCSSCKAAIGKRYPLVELATALLSGYVAWHFGFTWQAGAMLLLTWGLLAMSLIDADHQLLPDVLVLPLLWLGLIANHFGLFASLDDALFGAVFGYLSLWSVFWLFKLVTGKEGMGYGDFKLLAMLGAWGGWQILPLTILLSSLVGAILGVIMLRLRNAESGTPIPFGPYLAIAGWIALLWGDQITRTYLQFAGFK</sequence>
<proteinExistence type="evidence at protein level"/>
<feature type="chain" id="PRO_0000192625" description="Prepilin leader peptidase/N-methyltransferase">
    <location>
        <begin position="1"/>
        <end position="290"/>
    </location>
</feature>
<feature type="transmembrane region" description="Helical" evidence="1">
    <location>
        <begin position="13"/>
        <end position="33"/>
    </location>
</feature>
<feature type="transmembrane region" description="Helical" evidence="1">
    <location>
        <begin position="128"/>
        <end position="148"/>
    </location>
</feature>
<feature type="transmembrane region" description="Helical" evidence="1">
    <location>
        <begin position="158"/>
        <end position="178"/>
    </location>
</feature>
<feature type="transmembrane region" description="Helical" evidence="1">
    <location>
        <begin position="183"/>
        <end position="203"/>
    </location>
</feature>
<feature type="transmembrane region" description="Helical" evidence="1">
    <location>
        <begin position="228"/>
        <end position="248"/>
    </location>
</feature>
<feature type="transmembrane region" description="Helical" evidence="1">
    <location>
        <begin position="261"/>
        <end position="276"/>
    </location>
</feature>
<feature type="binding site" evidence="9">
    <location>
        <position position="72"/>
    </location>
    <ligand>
        <name>Zn(2+)</name>
        <dbReference type="ChEBI" id="CHEBI:29105"/>
    </ligand>
</feature>
<feature type="binding site" evidence="9">
    <location>
        <position position="75"/>
    </location>
    <ligand>
        <name>Zn(2+)</name>
        <dbReference type="ChEBI" id="CHEBI:29105"/>
    </ligand>
</feature>
<feature type="binding site" evidence="9">
    <location>
        <position position="97"/>
    </location>
    <ligand>
        <name>Zn(2+)</name>
        <dbReference type="ChEBI" id="CHEBI:29105"/>
    </ligand>
</feature>
<feature type="binding site" evidence="9">
    <location>
        <position position="100"/>
    </location>
    <ligand>
        <name>Zn(2+)</name>
        <dbReference type="ChEBI" id="CHEBI:29105"/>
    </ligand>
</feature>
<feature type="sequence variant" description="In strain: PAK.">
    <original>T</original>
    <variation>A</variation>
    <location>
        <position position="18"/>
    </location>
</feature>
<feature type="mutagenesis site" description="About 80% loss of peptidase activity and complete loss of methylase activity." evidence="5">
    <original>C</original>
    <variation>G</variation>
    <location>
        <position position="72"/>
    </location>
</feature>
<feature type="mutagenesis site" description="About 90% loss of peptidase activity and complete loss of methylase activity." evidence="5">
    <original>C</original>
    <variation>G</variation>
    <location>
        <position position="75"/>
    </location>
</feature>
<feature type="mutagenesis site" description="Complete loss of methylase activity." evidence="6">
    <original>G</original>
    <variation>D</variation>
    <location>
        <position position="95"/>
    </location>
</feature>
<feature type="mutagenesis site" description="About 95% loss of methylase activity." evidence="6">
    <original>K</original>
    <variation>E</variation>
    <location>
        <position position="96"/>
    </location>
</feature>
<feature type="mutagenesis site" description="Complete loss of peptidase and methylase activity." evidence="5">
    <original>C</original>
    <variation>G</variation>
    <location>
        <position position="97"/>
    </location>
</feature>
<feature type="mutagenesis site" description="About 95% loss of peptidase activity and complete loss of methylase activity." evidence="5">
    <original>C</original>
    <variation>G</variation>
    <location>
        <position position="100"/>
    </location>
</feature>
<protein>
    <recommendedName>
        <fullName evidence="7">Prepilin leader peptidase/N-methyltransferase</fullName>
    </recommendedName>
    <alternativeName>
        <fullName>Protein PilD</fullName>
    </alternativeName>
    <alternativeName>
        <fullName>Protein secretion protein XCPA</fullName>
    </alternativeName>
    <domain>
        <recommendedName>
            <fullName>Leader peptidase</fullName>
            <ecNumber evidence="2 3 5">3.4.23.43</ecNumber>
        </recommendedName>
        <alternativeName>
            <fullName>Prepilin peptidase</fullName>
        </alternativeName>
    </domain>
    <domain>
        <recommendedName>
            <fullName>N-methyltransferase</fullName>
            <ecNumber evidence="2 3 5">2.1.1.-</ecNumber>
        </recommendedName>
    </domain>
</protein>
<reference key="1">
    <citation type="journal article" date="1990" name="J. Bacteriol.">
        <title>Products of three accessory genes, pilB, pilC, and pilD, are required for biogenesis of Pseudomonas aeruginosa pili.</title>
        <authorList>
            <person name="Nunn D."/>
            <person name="Bergman S."/>
            <person name="Lory S."/>
        </authorList>
    </citation>
    <scope>NUCLEOTIDE SEQUENCE [GENOMIC DNA]</scope>
    <source>
        <strain>PAK</strain>
    </source>
</reference>
<reference key="2">
    <citation type="journal article" date="1991" name="J. Bacteriol.">
        <title>Protein secretion in Pseudomonas aeruginosa: the xcpA gene encodes an integral inner membrane protein homologous to Klebsiella pneumoniae secretion function protein PulO.</title>
        <authorList>
            <person name="Bally M."/>
            <person name="Ball G."/>
            <person name="Badere A."/>
            <person name="Lazdunski A."/>
        </authorList>
    </citation>
    <scope>NUCLEOTIDE SEQUENCE [GENOMIC DNA]</scope>
    <source>
        <strain>ATCC 15692 / DSM 22644 / CIP 104116 / JCM 14847 / LMG 12228 / 1C / PRS 101 / PAO1</strain>
    </source>
</reference>
<reference key="3">
    <citation type="journal article" date="2000" name="Nature">
        <title>Complete genome sequence of Pseudomonas aeruginosa PAO1, an opportunistic pathogen.</title>
        <authorList>
            <person name="Stover C.K."/>
            <person name="Pham X.-Q.T."/>
            <person name="Erwin A.L."/>
            <person name="Mizoguchi S.D."/>
            <person name="Warrener P."/>
            <person name="Hickey M.J."/>
            <person name="Brinkman F.S.L."/>
            <person name="Hufnagle W.O."/>
            <person name="Kowalik D.J."/>
            <person name="Lagrou M."/>
            <person name="Garber R.L."/>
            <person name="Goltry L."/>
            <person name="Tolentino E."/>
            <person name="Westbrock-Wadman S."/>
            <person name="Yuan Y."/>
            <person name="Brody L.L."/>
            <person name="Coulter S.N."/>
            <person name="Folger K.R."/>
            <person name="Kas A."/>
            <person name="Larbig K."/>
            <person name="Lim R.M."/>
            <person name="Smith K.A."/>
            <person name="Spencer D.H."/>
            <person name="Wong G.K.-S."/>
            <person name="Wu Z."/>
            <person name="Paulsen I.T."/>
            <person name="Reizer J."/>
            <person name="Saier M.H. Jr."/>
            <person name="Hancock R.E.W."/>
            <person name="Lory S."/>
            <person name="Olson M.V."/>
        </authorList>
    </citation>
    <scope>NUCLEOTIDE SEQUENCE [LARGE SCALE GENOMIC DNA]</scope>
    <source>
        <strain>ATCC 15692 / DSM 22644 / CIP 104116 / JCM 14847 / LMG 12228 / 1C / PRS 101 / PAO1</strain>
    </source>
</reference>
<reference key="4">
    <citation type="journal article" date="1997" name="Gene">
        <title>Structure-function relationship of type-IV prepilin peptidase of Pseudomonas aeruginosa -- a review.</title>
        <authorList>
            <person name="Lory S."/>
            <person name="Strom M.S."/>
        </authorList>
    </citation>
    <scope>REVIEW</scope>
</reference>
<reference key="5">
    <citation type="journal article" date="1994" name="Methods Enzymol.">
        <title>Posttranslational processing of type IV prepilin and homologs by PilD of Pseudomonas aeruginosa.</title>
        <authorList>
            <person name="Strom M.S."/>
            <person name="Nunn D.N."/>
            <person name="Lory S."/>
        </authorList>
    </citation>
    <scope>REVIEW</scope>
</reference>
<reference key="6">
    <citation type="journal article" date="1993" name="Proc. Natl. Acad. Sci. U.S.A.">
        <title>A single bifunctional enzyme, PilD, catalyzes cleavage and N-methylation of proteins belonging to the type IV pilin family.</title>
        <authorList>
            <person name="Strom M.S."/>
            <person name="Nunn D.N."/>
            <person name="Lory S."/>
        </authorList>
    </citation>
    <scope>FUNCTION</scope>
    <scope>CATALYTIC ACTIVITY</scope>
</reference>
<reference key="7">
    <citation type="journal article" date="1993" name="J. Bacteriol.">
        <title>Cleavage, methylation, and localization of the Pseudomonas aeruginosa export proteins XcpT, -U, -V, and -W.</title>
        <authorList>
            <person name="Nunn D.N."/>
            <person name="Lory S."/>
        </authorList>
    </citation>
    <scope>FUNCTION</scope>
    <scope>SUBCELLULAR LOCATION</scope>
    <source>
        <strain>PAK</strain>
    </source>
</reference>
<reference key="8">
    <citation type="journal article" date="1993" name="J. Biol. Chem.">
        <title>Identification of active-site cysteines in the conserved domain of PilD, the bifunctional type IV pilin leader peptidase/N-methyltransferase of Pseudomonas aeruginosa.</title>
        <authorList>
            <person name="Strom M.S."/>
            <person name="Bergman P."/>
            <person name="Lory S."/>
        </authorList>
    </citation>
    <scope>FUNCTION</scope>
    <scope>CATALYTIC ACTIVITY</scope>
    <scope>MUTAGENESIS OF CYS-72; CYS-75; CYS-97 AND CYS-100</scope>
</reference>
<reference key="9">
    <citation type="journal article" date="1998" name="J. Biol. Chem.">
        <title>Amino acid substitutions in PilD, a bifunctional enzyme of Pseudomonas aeruginosa. Effect on leader peptidase and N-methyltransferase activities in vitro and in vivo.</title>
        <authorList>
            <person name="Pepe J.C."/>
            <person name="Lory S."/>
        </authorList>
    </citation>
    <scope>MUTAGENESIS OF GLY-95 AND LYS-96</scope>
</reference>
<reference key="10">
    <citation type="journal article" date="2013" name="MicrobiologyOpen">
        <title>Cell-free production of integral membrane aspartic acid proteases reveals zinc-dependent methyltransferase activity of the Pseudomonas aeruginosa prepilin peptidase PilD.</title>
        <authorList>
            <person name="Aly K.A."/>
            <person name="Beebe E.T."/>
            <person name="Chan C.H."/>
            <person name="Goren M.A."/>
            <person name="Sepulveda C."/>
            <person name="Makino S."/>
            <person name="Fox B.G."/>
            <person name="Forest K.T."/>
        </authorList>
    </citation>
    <scope>FUNCTION</scope>
    <scope>CATALYTIC ACTIVITY</scope>
    <scope>COFACTOR</scope>
</reference>
<evidence type="ECO:0000255" key="1"/>
<evidence type="ECO:0000269" key="2">
    <source>
    </source>
</evidence>
<evidence type="ECO:0000269" key="3">
    <source>
    </source>
</evidence>
<evidence type="ECO:0000269" key="4">
    <source>
    </source>
</evidence>
<evidence type="ECO:0000269" key="5">
    <source>
    </source>
</evidence>
<evidence type="ECO:0000269" key="6">
    <source>
    </source>
</evidence>
<evidence type="ECO:0000303" key="7">
    <source>
    </source>
</evidence>
<evidence type="ECO:0000305" key="8"/>
<evidence type="ECO:0000305" key="9">
    <source>
    </source>
</evidence>
<name>LEP4_PSEAE</name>